<organism>
    <name type="scientific">Xanthomonas axonopodis pv. citri (strain 306)</name>
    <dbReference type="NCBI Taxonomy" id="190486"/>
    <lineage>
        <taxon>Bacteria</taxon>
        <taxon>Pseudomonadati</taxon>
        <taxon>Pseudomonadota</taxon>
        <taxon>Gammaproteobacteria</taxon>
        <taxon>Lysobacterales</taxon>
        <taxon>Lysobacteraceae</taxon>
        <taxon>Xanthomonas</taxon>
    </lineage>
</organism>
<sequence>MTDHRTRFLQLALDADALRFGEFTLKSGRLSPYFFNAGRFDSGAKTAQLAQCYADAIEAAGLDFDLLFGPAYKGIPLATALACAYAGRGRDLPLAFNRKEAKDHGEGGTLIGAPLAGRQVLIVDDVITAGTAIREALAIIRAAGGTPSGIAVALDRQEIASDQDRRSAAQAVAAEAGIPVIAVANLGDLLAFAAGNADLVGFQEPLLAYRGRYGTDTTG</sequence>
<evidence type="ECO:0000255" key="1">
    <source>
        <dbReference type="HAMAP-Rule" id="MF_01208"/>
    </source>
</evidence>
<feature type="chain" id="PRO_0000110770" description="Orotate phosphoribosyltransferase">
    <location>
        <begin position="1"/>
        <end position="219"/>
    </location>
</feature>
<feature type="binding site" description="in other chain" evidence="1">
    <location>
        <position position="26"/>
    </location>
    <ligand>
        <name>5-phospho-alpha-D-ribose 1-diphosphate</name>
        <dbReference type="ChEBI" id="CHEBI:58017"/>
        <note>ligand shared between dimeric partners</note>
    </ligand>
</feature>
<feature type="binding site" evidence="1">
    <location>
        <begin position="34"/>
        <end position="35"/>
    </location>
    <ligand>
        <name>orotate</name>
        <dbReference type="ChEBI" id="CHEBI:30839"/>
    </ligand>
</feature>
<feature type="binding site" description="in other chain" evidence="1">
    <location>
        <begin position="72"/>
        <end position="73"/>
    </location>
    <ligand>
        <name>5-phospho-alpha-D-ribose 1-diphosphate</name>
        <dbReference type="ChEBI" id="CHEBI:58017"/>
        <note>ligand shared between dimeric partners</note>
    </ligand>
</feature>
<feature type="binding site" evidence="1">
    <location>
        <position position="98"/>
    </location>
    <ligand>
        <name>5-phospho-alpha-D-ribose 1-diphosphate</name>
        <dbReference type="ChEBI" id="CHEBI:58017"/>
        <note>ligand shared between dimeric partners</note>
    </ligand>
</feature>
<feature type="binding site" description="in other chain" evidence="1">
    <location>
        <position position="99"/>
    </location>
    <ligand>
        <name>5-phospho-alpha-D-ribose 1-diphosphate</name>
        <dbReference type="ChEBI" id="CHEBI:58017"/>
        <note>ligand shared between dimeric partners</note>
    </ligand>
</feature>
<feature type="binding site" evidence="1">
    <location>
        <position position="102"/>
    </location>
    <ligand>
        <name>5-phospho-alpha-D-ribose 1-diphosphate</name>
        <dbReference type="ChEBI" id="CHEBI:58017"/>
        <note>ligand shared between dimeric partners</note>
    </ligand>
</feature>
<feature type="binding site" evidence="1">
    <location>
        <position position="104"/>
    </location>
    <ligand>
        <name>5-phospho-alpha-D-ribose 1-diphosphate</name>
        <dbReference type="ChEBI" id="CHEBI:58017"/>
        <note>ligand shared between dimeric partners</note>
    </ligand>
</feature>
<feature type="binding site" description="in other chain" evidence="1">
    <location>
        <begin position="124"/>
        <end position="132"/>
    </location>
    <ligand>
        <name>5-phospho-alpha-D-ribose 1-diphosphate</name>
        <dbReference type="ChEBI" id="CHEBI:58017"/>
        <note>ligand shared between dimeric partners</note>
    </ligand>
</feature>
<feature type="binding site" evidence="1">
    <location>
        <position position="128"/>
    </location>
    <ligand>
        <name>orotate</name>
        <dbReference type="ChEBI" id="CHEBI:30839"/>
    </ligand>
</feature>
<feature type="binding site" evidence="1">
    <location>
        <position position="156"/>
    </location>
    <ligand>
        <name>orotate</name>
        <dbReference type="ChEBI" id="CHEBI:30839"/>
    </ligand>
</feature>
<proteinExistence type="inferred from homology"/>
<gene>
    <name evidence="1" type="primary">pyrE</name>
    <name type="ordered locus">XAC3903</name>
</gene>
<accession>Q8PFS5</accession>
<protein>
    <recommendedName>
        <fullName evidence="1">Orotate phosphoribosyltransferase</fullName>
        <shortName evidence="1">OPRT</shortName>
        <shortName evidence="1">OPRTase</shortName>
        <ecNumber evidence="1">2.4.2.10</ecNumber>
    </recommendedName>
</protein>
<reference key="1">
    <citation type="journal article" date="2002" name="Nature">
        <title>Comparison of the genomes of two Xanthomonas pathogens with differing host specificities.</title>
        <authorList>
            <person name="da Silva A.C.R."/>
            <person name="Ferro J.A."/>
            <person name="Reinach F.C."/>
            <person name="Farah C.S."/>
            <person name="Furlan L.R."/>
            <person name="Quaggio R.B."/>
            <person name="Monteiro-Vitorello C.B."/>
            <person name="Van Sluys M.A."/>
            <person name="Almeida N.F. Jr."/>
            <person name="Alves L.M.C."/>
            <person name="do Amaral A.M."/>
            <person name="Bertolini M.C."/>
            <person name="Camargo L.E.A."/>
            <person name="Camarotte G."/>
            <person name="Cannavan F."/>
            <person name="Cardozo J."/>
            <person name="Chambergo F."/>
            <person name="Ciapina L.P."/>
            <person name="Cicarelli R.M.B."/>
            <person name="Coutinho L.L."/>
            <person name="Cursino-Santos J.R."/>
            <person name="El-Dorry H."/>
            <person name="Faria J.B."/>
            <person name="Ferreira A.J.S."/>
            <person name="Ferreira R.C.C."/>
            <person name="Ferro M.I.T."/>
            <person name="Formighieri E.F."/>
            <person name="Franco M.C."/>
            <person name="Greggio C.C."/>
            <person name="Gruber A."/>
            <person name="Katsuyama A.M."/>
            <person name="Kishi L.T."/>
            <person name="Leite R.P."/>
            <person name="Lemos E.G.M."/>
            <person name="Lemos M.V.F."/>
            <person name="Locali E.C."/>
            <person name="Machado M.A."/>
            <person name="Madeira A.M.B.N."/>
            <person name="Martinez-Rossi N.M."/>
            <person name="Martins E.C."/>
            <person name="Meidanis J."/>
            <person name="Menck C.F.M."/>
            <person name="Miyaki C.Y."/>
            <person name="Moon D.H."/>
            <person name="Moreira L.M."/>
            <person name="Novo M.T.M."/>
            <person name="Okura V.K."/>
            <person name="Oliveira M.C."/>
            <person name="Oliveira V.R."/>
            <person name="Pereira H.A."/>
            <person name="Rossi A."/>
            <person name="Sena J.A.D."/>
            <person name="Silva C."/>
            <person name="de Souza R.F."/>
            <person name="Spinola L.A.F."/>
            <person name="Takita M.A."/>
            <person name="Tamura R.E."/>
            <person name="Teixeira E.C."/>
            <person name="Tezza R.I.D."/>
            <person name="Trindade dos Santos M."/>
            <person name="Truffi D."/>
            <person name="Tsai S.M."/>
            <person name="White F.F."/>
            <person name="Setubal J.C."/>
            <person name="Kitajima J.P."/>
        </authorList>
    </citation>
    <scope>NUCLEOTIDE SEQUENCE [LARGE SCALE GENOMIC DNA]</scope>
    <source>
        <strain>306</strain>
    </source>
</reference>
<comment type="function">
    <text evidence="1">Catalyzes the transfer of a ribosyl phosphate group from 5-phosphoribose 1-diphosphate to orotate, leading to the formation of orotidine monophosphate (OMP).</text>
</comment>
<comment type="catalytic activity">
    <reaction evidence="1">
        <text>orotidine 5'-phosphate + diphosphate = orotate + 5-phospho-alpha-D-ribose 1-diphosphate</text>
        <dbReference type="Rhea" id="RHEA:10380"/>
        <dbReference type="ChEBI" id="CHEBI:30839"/>
        <dbReference type="ChEBI" id="CHEBI:33019"/>
        <dbReference type="ChEBI" id="CHEBI:57538"/>
        <dbReference type="ChEBI" id="CHEBI:58017"/>
        <dbReference type="EC" id="2.4.2.10"/>
    </reaction>
</comment>
<comment type="cofactor">
    <cofactor evidence="1">
        <name>Mg(2+)</name>
        <dbReference type="ChEBI" id="CHEBI:18420"/>
    </cofactor>
</comment>
<comment type="pathway">
    <text evidence="1">Pyrimidine metabolism; UMP biosynthesis via de novo pathway; UMP from orotate: step 1/2.</text>
</comment>
<comment type="subunit">
    <text evidence="1">Homodimer.</text>
</comment>
<comment type="similarity">
    <text evidence="1">Belongs to the purine/pyrimidine phosphoribosyltransferase family. PyrE subfamily.</text>
</comment>
<name>PYRE_XANAC</name>
<keyword id="KW-0328">Glycosyltransferase</keyword>
<keyword id="KW-0460">Magnesium</keyword>
<keyword id="KW-0665">Pyrimidine biosynthesis</keyword>
<keyword id="KW-0808">Transferase</keyword>
<dbReference type="EC" id="2.4.2.10" evidence="1"/>
<dbReference type="EMBL" id="AE008923">
    <property type="protein sequence ID" value="AAM38740.1"/>
    <property type="molecule type" value="Genomic_DNA"/>
</dbReference>
<dbReference type="RefSeq" id="WP_011052593.1">
    <property type="nucleotide sequence ID" value="NC_003919.1"/>
</dbReference>
<dbReference type="SMR" id="Q8PFS5"/>
<dbReference type="GeneID" id="66912921"/>
<dbReference type="KEGG" id="xac:XAC3903"/>
<dbReference type="eggNOG" id="COG0461">
    <property type="taxonomic scope" value="Bacteria"/>
</dbReference>
<dbReference type="HOGENOM" id="CLU_074878_0_1_6"/>
<dbReference type="UniPathway" id="UPA00070">
    <property type="reaction ID" value="UER00119"/>
</dbReference>
<dbReference type="Proteomes" id="UP000000576">
    <property type="component" value="Chromosome"/>
</dbReference>
<dbReference type="GO" id="GO:0005737">
    <property type="term" value="C:cytoplasm"/>
    <property type="evidence" value="ECO:0007669"/>
    <property type="project" value="TreeGrafter"/>
</dbReference>
<dbReference type="GO" id="GO:0000287">
    <property type="term" value="F:magnesium ion binding"/>
    <property type="evidence" value="ECO:0007669"/>
    <property type="project" value="UniProtKB-UniRule"/>
</dbReference>
<dbReference type="GO" id="GO:0004588">
    <property type="term" value="F:orotate phosphoribosyltransferase activity"/>
    <property type="evidence" value="ECO:0007669"/>
    <property type="project" value="UniProtKB-UniRule"/>
</dbReference>
<dbReference type="GO" id="GO:0006207">
    <property type="term" value="P:'de novo' pyrimidine nucleobase biosynthetic process"/>
    <property type="evidence" value="ECO:0007669"/>
    <property type="project" value="TreeGrafter"/>
</dbReference>
<dbReference type="GO" id="GO:0044205">
    <property type="term" value="P:'de novo' UMP biosynthetic process"/>
    <property type="evidence" value="ECO:0007669"/>
    <property type="project" value="UniProtKB-UniRule"/>
</dbReference>
<dbReference type="GO" id="GO:0046132">
    <property type="term" value="P:pyrimidine ribonucleoside biosynthetic process"/>
    <property type="evidence" value="ECO:0007669"/>
    <property type="project" value="TreeGrafter"/>
</dbReference>
<dbReference type="CDD" id="cd06223">
    <property type="entry name" value="PRTases_typeI"/>
    <property type="match status" value="1"/>
</dbReference>
<dbReference type="FunFam" id="3.40.50.2020:FF:000052">
    <property type="entry name" value="Orotate phosphoribosyltransferase"/>
    <property type="match status" value="1"/>
</dbReference>
<dbReference type="Gene3D" id="3.40.50.2020">
    <property type="match status" value="1"/>
</dbReference>
<dbReference type="HAMAP" id="MF_01208">
    <property type="entry name" value="PyrE"/>
    <property type="match status" value="1"/>
</dbReference>
<dbReference type="InterPro" id="IPR023031">
    <property type="entry name" value="OPRT"/>
</dbReference>
<dbReference type="InterPro" id="IPR004467">
    <property type="entry name" value="Or_phspho_trans_dom"/>
</dbReference>
<dbReference type="InterPro" id="IPR000836">
    <property type="entry name" value="PRibTrfase_dom"/>
</dbReference>
<dbReference type="InterPro" id="IPR029057">
    <property type="entry name" value="PRTase-like"/>
</dbReference>
<dbReference type="NCBIfam" id="TIGR00336">
    <property type="entry name" value="pyrE"/>
    <property type="match status" value="1"/>
</dbReference>
<dbReference type="PANTHER" id="PTHR46683">
    <property type="entry name" value="OROTATE PHOSPHORIBOSYLTRANSFERASE 1-RELATED"/>
    <property type="match status" value="1"/>
</dbReference>
<dbReference type="PANTHER" id="PTHR46683:SF1">
    <property type="entry name" value="OROTATE PHOSPHORIBOSYLTRANSFERASE 1-RELATED"/>
    <property type="match status" value="1"/>
</dbReference>
<dbReference type="Pfam" id="PF00156">
    <property type="entry name" value="Pribosyltran"/>
    <property type="match status" value="1"/>
</dbReference>
<dbReference type="SUPFAM" id="SSF53271">
    <property type="entry name" value="PRTase-like"/>
    <property type="match status" value="1"/>
</dbReference>
<dbReference type="PROSITE" id="PS00103">
    <property type="entry name" value="PUR_PYR_PR_TRANSFER"/>
    <property type="match status" value="1"/>
</dbReference>